<comment type="catalytic activity">
    <reaction evidence="1">
        <text>2-(N(omega)-L-arginino)succinate = fumarate + L-arginine</text>
        <dbReference type="Rhea" id="RHEA:24020"/>
        <dbReference type="ChEBI" id="CHEBI:29806"/>
        <dbReference type="ChEBI" id="CHEBI:32682"/>
        <dbReference type="ChEBI" id="CHEBI:57472"/>
        <dbReference type="EC" id="4.3.2.1"/>
    </reaction>
</comment>
<comment type="pathway">
    <text evidence="1">Amino-acid biosynthesis; L-arginine biosynthesis; L-arginine from L-ornithine and carbamoyl phosphate: step 3/3.</text>
</comment>
<comment type="subcellular location">
    <subcellularLocation>
        <location evidence="1">Cytoplasm</location>
    </subcellularLocation>
</comment>
<comment type="similarity">
    <text evidence="1">Belongs to the lyase 1 family. Argininosuccinate lyase subfamily.</text>
</comment>
<organism>
    <name type="scientific">Staphylococcus aureus (strain USA300)</name>
    <dbReference type="NCBI Taxonomy" id="367830"/>
    <lineage>
        <taxon>Bacteria</taxon>
        <taxon>Bacillati</taxon>
        <taxon>Bacillota</taxon>
        <taxon>Bacilli</taxon>
        <taxon>Bacillales</taxon>
        <taxon>Staphylococcaceae</taxon>
        <taxon>Staphylococcus</taxon>
    </lineage>
</organism>
<gene>
    <name evidence="1" type="primary">argH</name>
    <name type="ordered locus">SAUSA300_0863</name>
</gene>
<accession>Q2FIB5</accession>
<proteinExistence type="inferred from homology"/>
<feature type="chain" id="PRO_0000240774" description="Argininosuccinate lyase">
    <location>
        <begin position="1"/>
        <end position="459"/>
    </location>
</feature>
<dbReference type="EC" id="4.3.2.1" evidence="1"/>
<dbReference type="EMBL" id="CP000255">
    <property type="protein sequence ID" value="ABD20820.1"/>
    <property type="molecule type" value="Genomic_DNA"/>
</dbReference>
<dbReference type="RefSeq" id="WP_000066062.1">
    <property type="nucleotide sequence ID" value="NZ_CP027476.1"/>
</dbReference>
<dbReference type="SMR" id="Q2FIB5"/>
<dbReference type="KEGG" id="saa:SAUSA300_0863"/>
<dbReference type="HOGENOM" id="CLU_027272_2_3_9"/>
<dbReference type="OMA" id="DFAIEFC"/>
<dbReference type="UniPathway" id="UPA00068">
    <property type="reaction ID" value="UER00114"/>
</dbReference>
<dbReference type="PHI-base" id="PHI:2632"/>
<dbReference type="Proteomes" id="UP000001939">
    <property type="component" value="Chromosome"/>
</dbReference>
<dbReference type="GO" id="GO:0005829">
    <property type="term" value="C:cytosol"/>
    <property type="evidence" value="ECO:0007669"/>
    <property type="project" value="TreeGrafter"/>
</dbReference>
<dbReference type="GO" id="GO:0004056">
    <property type="term" value="F:argininosuccinate lyase activity"/>
    <property type="evidence" value="ECO:0007669"/>
    <property type="project" value="UniProtKB-UniRule"/>
</dbReference>
<dbReference type="GO" id="GO:0042450">
    <property type="term" value="P:arginine biosynthetic process via ornithine"/>
    <property type="evidence" value="ECO:0007669"/>
    <property type="project" value="InterPro"/>
</dbReference>
<dbReference type="GO" id="GO:0006526">
    <property type="term" value="P:L-arginine biosynthetic process"/>
    <property type="evidence" value="ECO:0007669"/>
    <property type="project" value="UniProtKB-UniRule"/>
</dbReference>
<dbReference type="CDD" id="cd01359">
    <property type="entry name" value="Argininosuccinate_lyase"/>
    <property type="match status" value="1"/>
</dbReference>
<dbReference type="FunFam" id="1.10.275.10:FF:000002">
    <property type="entry name" value="Argininosuccinate lyase"/>
    <property type="match status" value="1"/>
</dbReference>
<dbReference type="FunFam" id="1.10.40.30:FF:000001">
    <property type="entry name" value="Argininosuccinate lyase"/>
    <property type="match status" value="1"/>
</dbReference>
<dbReference type="FunFam" id="1.20.200.10:FF:000002">
    <property type="entry name" value="Argininosuccinate lyase"/>
    <property type="match status" value="1"/>
</dbReference>
<dbReference type="Gene3D" id="1.10.40.30">
    <property type="entry name" value="Fumarase/aspartase (C-terminal domain)"/>
    <property type="match status" value="1"/>
</dbReference>
<dbReference type="Gene3D" id="1.20.200.10">
    <property type="entry name" value="Fumarase/aspartase (Central domain)"/>
    <property type="match status" value="1"/>
</dbReference>
<dbReference type="Gene3D" id="1.10.275.10">
    <property type="entry name" value="Fumarase/aspartase (N-terminal domain)"/>
    <property type="match status" value="1"/>
</dbReference>
<dbReference type="HAMAP" id="MF_00006">
    <property type="entry name" value="Arg_succ_lyase"/>
    <property type="match status" value="1"/>
</dbReference>
<dbReference type="InterPro" id="IPR029419">
    <property type="entry name" value="Arg_succ_lyase_C"/>
</dbReference>
<dbReference type="InterPro" id="IPR009049">
    <property type="entry name" value="Argininosuccinate_lyase"/>
</dbReference>
<dbReference type="InterPro" id="IPR024083">
    <property type="entry name" value="Fumarase/histidase_N"/>
</dbReference>
<dbReference type="InterPro" id="IPR020557">
    <property type="entry name" value="Fumarate_lyase_CS"/>
</dbReference>
<dbReference type="InterPro" id="IPR000362">
    <property type="entry name" value="Fumarate_lyase_fam"/>
</dbReference>
<dbReference type="InterPro" id="IPR022761">
    <property type="entry name" value="Fumarate_lyase_N"/>
</dbReference>
<dbReference type="InterPro" id="IPR008948">
    <property type="entry name" value="L-Aspartase-like"/>
</dbReference>
<dbReference type="NCBIfam" id="TIGR00838">
    <property type="entry name" value="argH"/>
    <property type="match status" value="1"/>
</dbReference>
<dbReference type="PANTHER" id="PTHR43814">
    <property type="entry name" value="ARGININOSUCCINATE LYASE"/>
    <property type="match status" value="1"/>
</dbReference>
<dbReference type="PANTHER" id="PTHR43814:SF1">
    <property type="entry name" value="ARGININOSUCCINATE LYASE"/>
    <property type="match status" value="1"/>
</dbReference>
<dbReference type="Pfam" id="PF14698">
    <property type="entry name" value="ASL_C2"/>
    <property type="match status" value="1"/>
</dbReference>
<dbReference type="Pfam" id="PF00206">
    <property type="entry name" value="Lyase_1"/>
    <property type="match status" value="1"/>
</dbReference>
<dbReference type="PRINTS" id="PR00145">
    <property type="entry name" value="ARGSUCLYASE"/>
</dbReference>
<dbReference type="PRINTS" id="PR00149">
    <property type="entry name" value="FUMRATELYASE"/>
</dbReference>
<dbReference type="SUPFAM" id="SSF48557">
    <property type="entry name" value="L-aspartase-like"/>
    <property type="match status" value="1"/>
</dbReference>
<dbReference type="PROSITE" id="PS00163">
    <property type="entry name" value="FUMARATE_LYASES"/>
    <property type="match status" value="1"/>
</dbReference>
<sequence length="459" mass="52047">MSNKAWGGRFEVQPEEWVDDFNASITFDQTLIDQDIEGSIAHATMLANQGIISQQDSEQIIQGLKSIQHDYHQDQIQFSASLEDIHLNIEHELIKRIGDAGGKLHTGRSRNDQVATDMHLYTKKQVQDIIALIKSLQSVIVDIASNNVDTIMPSYTHLQRAQPISFAHHIMTYFWMLQRDQQRFEDSLKRIDINPLGAAALSGTTYPIDRHETTALLNFGSLYENSLDAVSDRDYIIETLHNISLTMVHLSRFAEEIIFWSTDEAKFITLSDAFSTGSSIMPQKKNPDMAELIRGKVGRTTGHLMSMLMTLKGLPLAYNKDMQEDKEGLFDAVHTIKGSLRIFEGMIQTMTINKERLNQTVKEDFSNATELADYLVTKNIPFRTAHEIVGKIVLECIQQGHYLLDVPLATYQQHHSSIDADIYDYLQPENCLKRRQSYGSTGQSSVKQQLDVAKQLLSQ</sequence>
<reference key="1">
    <citation type="journal article" date="2006" name="Lancet">
        <title>Complete genome sequence of USA300, an epidemic clone of community-acquired meticillin-resistant Staphylococcus aureus.</title>
        <authorList>
            <person name="Diep B.A."/>
            <person name="Gill S.R."/>
            <person name="Chang R.F."/>
            <person name="Phan T.H."/>
            <person name="Chen J.H."/>
            <person name="Davidson M.G."/>
            <person name="Lin F."/>
            <person name="Lin J."/>
            <person name="Carleton H.A."/>
            <person name="Mongodin E.F."/>
            <person name="Sensabaugh G.F."/>
            <person name="Perdreau-Remington F."/>
        </authorList>
    </citation>
    <scope>NUCLEOTIDE SEQUENCE [LARGE SCALE GENOMIC DNA]</scope>
    <source>
        <strain>USA300</strain>
    </source>
</reference>
<protein>
    <recommendedName>
        <fullName evidence="1">Argininosuccinate lyase</fullName>
        <shortName evidence="1">ASAL</shortName>
        <ecNumber evidence="1">4.3.2.1</ecNumber>
    </recommendedName>
    <alternativeName>
        <fullName evidence="1">Arginosuccinase</fullName>
    </alternativeName>
</protein>
<keyword id="KW-0028">Amino-acid biosynthesis</keyword>
<keyword id="KW-0055">Arginine biosynthesis</keyword>
<keyword id="KW-0963">Cytoplasm</keyword>
<keyword id="KW-0456">Lyase</keyword>
<evidence type="ECO:0000255" key="1">
    <source>
        <dbReference type="HAMAP-Rule" id="MF_00006"/>
    </source>
</evidence>
<name>ARLY_STAA3</name>